<protein>
    <recommendedName>
        <fullName evidence="1">UPF0060 membrane protein GDI3492/Gdia_2889</fullName>
    </recommendedName>
</protein>
<organism>
    <name type="scientific">Gluconacetobacter diazotrophicus (strain ATCC 49037 / DSM 5601 / CCUG 37298 / CIP 103539 / LMG 7603 / PAl5)</name>
    <dbReference type="NCBI Taxonomy" id="272568"/>
    <lineage>
        <taxon>Bacteria</taxon>
        <taxon>Pseudomonadati</taxon>
        <taxon>Pseudomonadota</taxon>
        <taxon>Alphaproteobacteria</taxon>
        <taxon>Acetobacterales</taxon>
        <taxon>Acetobacteraceae</taxon>
        <taxon>Gluconacetobacter</taxon>
    </lineage>
</organism>
<name>Y3492_GLUDA</name>
<reference key="1">
    <citation type="journal article" date="2009" name="BMC Genomics">
        <title>Complete genome sequence of the sugarcane nitrogen-fixing endophyte Gluconacetobacter diazotrophicus Pal5.</title>
        <authorList>
            <person name="Bertalan M."/>
            <person name="Albano R."/>
            <person name="de Padua V."/>
            <person name="Rouws L."/>
            <person name="Rojas C."/>
            <person name="Hemerly A."/>
            <person name="Teixeira K."/>
            <person name="Schwab S."/>
            <person name="Araujo J."/>
            <person name="Oliveira A."/>
            <person name="Franca L."/>
            <person name="Magalhaes V."/>
            <person name="Alqueres S."/>
            <person name="Cardoso A."/>
            <person name="Almeida W."/>
            <person name="Loureiro M.M."/>
            <person name="Nogueira E."/>
            <person name="Cidade D."/>
            <person name="Oliveira D."/>
            <person name="Simao T."/>
            <person name="Macedo J."/>
            <person name="Valadao A."/>
            <person name="Dreschsel M."/>
            <person name="Freitas F."/>
            <person name="Vidal M."/>
            <person name="Guedes H."/>
            <person name="Rodrigues E."/>
            <person name="Meneses C."/>
            <person name="Brioso P."/>
            <person name="Pozzer L."/>
            <person name="Figueiredo D."/>
            <person name="Montano H."/>
            <person name="Junior J."/>
            <person name="de Souza Filho G."/>
            <person name="Martin Quintana Flores V."/>
            <person name="Ferreira B."/>
            <person name="Branco A."/>
            <person name="Gonzalez P."/>
            <person name="Guillobel H."/>
            <person name="Lemos M."/>
            <person name="Seibel L."/>
            <person name="Macedo J."/>
            <person name="Alves-Ferreira M."/>
            <person name="Sachetto-Martins G."/>
            <person name="Coelho A."/>
            <person name="Santos E."/>
            <person name="Amaral G."/>
            <person name="Neves A."/>
            <person name="Pacheco A.B."/>
            <person name="Carvalho D."/>
            <person name="Lery L."/>
            <person name="Bisch P."/>
            <person name="Rossle S.C."/>
            <person name="Urmenyi T."/>
            <person name="Rael Pereira A."/>
            <person name="Silva R."/>
            <person name="Rondinelli E."/>
            <person name="von Kruger W."/>
            <person name="Martins O."/>
            <person name="Baldani J.I."/>
            <person name="Ferreira P.C."/>
        </authorList>
    </citation>
    <scope>NUCLEOTIDE SEQUENCE [LARGE SCALE GENOMIC DNA]</scope>
    <source>
        <strain>ATCC 49037 / DSM 5601 / CCUG 37298 / CIP 103539 / LMG 7603 / PAl5</strain>
    </source>
</reference>
<reference key="2">
    <citation type="journal article" date="2010" name="Stand. Genomic Sci.">
        <title>Two genome sequences of the same bacterial strain, Gluconacetobacter diazotrophicus PAl 5, suggest a new standard in genome sequence submission.</title>
        <authorList>
            <person name="Giongo A."/>
            <person name="Tyler H.L."/>
            <person name="Zipperer U.N."/>
            <person name="Triplett E.W."/>
        </authorList>
    </citation>
    <scope>NUCLEOTIDE SEQUENCE [LARGE SCALE GENOMIC DNA]</scope>
    <source>
        <strain>ATCC 49037 / DSM 5601 / CCUG 37298 / CIP 103539 / LMG 7603 / PAl5</strain>
    </source>
</reference>
<dbReference type="EMBL" id="AM889285">
    <property type="protein sequence ID" value="CAP57435.1"/>
    <property type="molecule type" value="Genomic_DNA"/>
</dbReference>
<dbReference type="EMBL" id="CP001189">
    <property type="protein sequence ID" value="ACI52620.1"/>
    <property type="status" value="ALT_INIT"/>
    <property type="molecule type" value="Genomic_DNA"/>
</dbReference>
<dbReference type="RefSeq" id="WP_012554645.1">
    <property type="nucleotide sequence ID" value="NC_011365.1"/>
</dbReference>
<dbReference type="SMR" id="A9H4G8"/>
<dbReference type="STRING" id="272568.GDI3492"/>
<dbReference type="KEGG" id="gdi:GDI3492"/>
<dbReference type="KEGG" id="gdj:Gdia_2889"/>
<dbReference type="eggNOG" id="COG1742">
    <property type="taxonomic scope" value="Bacteria"/>
</dbReference>
<dbReference type="HOGENOM" id="CLU_117653_1_0_5"/>
<dbReference type="Proteomes" id="UP000001176">
    <property type="component" value="Chromosome"/>
</dbReference>
<dbReference type="GO" id="GO:0005886">
    <property type="term" value="C:plasma membrane"/>
    <property type="evidence" value="ECO:0007669"/>
    <property type="project" value="UniProtKB-SubCell"/>
</dbReference>
<dbReference type="HAMAP" id="MF_00010">
    <property type="entry name" value="UPF0060"/>
    <property type="match status" value="1"/>
</dbReference>
<dbReference type="InterPro" id="IPR003844">
    <property type="entry name" value="UPF0060"/>
</dbReference>
<dbReference type="NCBIfam" id="NF002586">
    <property type="entry name" value="PRK02237.1"/>
    <property type="match status" value="1"/>
</dbReference>
<dbReference type="PANTHER" id="PTHR36116">
    <property type="entry name" value="UPF0060 MEMBRANE PROTEIN YNFA"/>
    <property type="match status" value="1"/>
</dbReference>
<dbReference type="PANTHER" id="PTHR36116:SF1">
    <property type="entry name" value="UPF0060 MEMBRANE PROTEIN YNFA"/>
    <property type="match status" value="1"/>
</dbReference>
<dbReference type="Pfam" id="PF02694">
    <property type="entry name" value="UPF0060"/>
    <property type="match status" value="1"/>
</dbReference>
<dbReference type="SUPFAM" id="SSF103481">
    <property type="entry name" value="Multidrug resistance efflux transporter EmrE"/>
    <property type="match status" value="1"/>
</dbReference>
<gene>
    <name type="ordered locus">GDI3492</name>
    <name type="ordered locus">Gdia_2889</name>
</gene>
<proteinExistence type="inferred from homology"/>
<feature type="chain" id="PRO_0000336104" description="UPF0060 membrane protein GDI3492/Gdia_2889">
    <location>
        <begin position="1"/>
        <end position="114"/>
    </location>
</feature>
<feature type="transmembrane region" description="Helical" evidence="1">
    <location>
        <begin position="8"/>
        <end position="28"/>
    </location>
</feature>
<feature type="transmembrane region" description="Helical" evidence="1">
    <location>
        <begin position="35"/>
        <end position="55"/>
    </location>
</feature>
<feature type="transmembrane region" description="Helical" evidence="1">
    <location>
        <begin position="64"/>
        <end position="84"/>
    </location>
</feature>
<feature type="transmembrane region" description="Helical" evidence="1">
    <location>
        <begin position="92"/>
        <end position="112"/>
    </location>
</feature>
<feature type="sequence conflict" description="In Ref. 2; ACI52620." evidence="2" ref="2">
    <original>L</original>
    <variation>P</variation>
    <location>
        <position position="89"/>
    </location>
</feature>
<keyword id="KW-0997">Cell inner membrane</keyword>
<keyword id="KW-1003">Cell membrane</keyword>
<keyword id="KW-0472">Membrane</keyword>
<keyword id="KW-1185">Reference proteome</keyword>
<keyword id="KW-0812">Transmembrane</keyword>
<keyword id="KW-1133">Transmembrane helix</keyword>
<evidence type="ECO:0000255" key="1">
    <source>
        <dbReference type="HAMAP-Rule" id="MF_00010"/>
    </source>
</evidence>
<evidence type="ECO:0000305" key="2"/>
<sequence length="114" mass="11951">MRMLLGSFAVYAAAALCEIGGCYAWWCWRRAGAGAWVLLPGMASLALFGWLLTLVDSDTAGRTFAAYGGIYIVGAIVWLRLVEGRPVTLRDAAGVAICLAGAAIILSAGRGAER</sequence>
<accession>A9H4G8</accession>
<accession>B5ZI87</accession>
<comment type="subcellular location">
    <subcellularLocation>
        <location evidence="1">Cell inner membrane</location>
        <topology evidence="1">Multi-pass membrane protein</topology>
    </subcellularLocation>
</comment>
<comment type="similarity">
    <text evidence="1">Belongs to the UPF0060 family.</text>
</comment>
<comment type="sequence caution" evidence="2">
    <conflict type="erroneous initiation">
        <sequence resource="EMBL-CDS" id="ACI52620"/>
    </conflict>
</comment>